<feature type="signal peptide" evidence="1">
    <location>
        <begin position="1"/>
        <end position="16"/>
    </location>
</feature>
<feature type="chain" id="PRO_0000014944" description="Sialic acid-binding Ig-like lectin 5">
    <location>
        <begin position="17"/>
        <end position="551"/>
    </location>
</feature>
<feature type="topological domain" description="Extracellular" evidence="1">
    <location>
        <begin position="17"/>
        <end position="441"/>
    </location>
</feature>
<feature type="transmembrane region" description="Helical" evidence="1">
    <location>
        <begin position="442"/>
        <end position="462"/>
    </location>
</feature>
<feature type="topological domain" description="Cytoplasmic" evidence="1">
    <location>
        <begin position="463"/>
        <end position="551"/>
    </location>
</feature>
<feature type="domain" description="Ig-like V-type">
    <location>
        <begin position="19"/>
        <end position="136"/>
    </location>
</feature>
<feature type="domain" description="Ig-like C2-type 1">
    <location>
        <begin position="146"/>
        <end position="229"/>
    </location>
</feature>
<feature type="domain" description="Ig-like C2-type 2">
    <location>
        <begin position="236"/>
        <end position="330"/>
    </location>
</feature>
<feature type="region of interest" description="Disordered" evidence="3">
    <location>
        <begin position="189"/>
        <end position="210"/>
    </location>
</feature>
<feature type="region of interest" description="Disordered" evidence="3">
    <location>
        <begin position="469"/>
        <end position="551"/>
    </location>
</feature>
<feature type="short sequence motif" description="ITIM motif">
    <location>
        <begin position="518"/>
        <end position="523"/>
    </location>
</feature>
<feature type="short sequence motif" description="SLAM-like motif">
    <location>
        <begin position="542"/>
        <end position="547"/>
    </location>
</feature>
<feature type="compositionally biased region" description="Basic and acidic residues" evidence="3">
    <location>
        <begin position="528"/>
        <end position="537"/>
    </location>
</feature>
<feature type="binding site" evidence="5">
    <location>
        <position position="119"/>
    </location>
    <ligand>
        <name>N-acetylneuraminate</name>
        <dbReference type="ChEBI" id="CHEBI:35418"/>
    </ligand>
</feature>
<feature type="binding site" evidence="5">
    <location>
        <position position="127"/>
    </location>
    <ligand>
        <name>N-acetylneuraminate</name>
        <dbReference type="ChEBI" id="CHEBI:35418"/>
    </ligand>
</feature>
<feature type="binding site" evidence="5">
    <location>
        <position position="129"/>
    </location>
    <ligand>
        <name>N-acetylneuraminate</name>
        <dbReference type="ChEBI" id="CHEBI:35418"/>
    </ligand>
</feature>
<feature type="glycosylation site" description="N-linked (GlcNAc...) asparagine" evidence="1">
    <location>
        <position position="100"/>
    </location>
</feature>
<feature type="glycosylation site" description="N-linked (GlcNAc...) asparagine" evidence="1">
    <location>
        <position position="210"/>
    </location>
</feature>
<feature type="glycosylation site" description="N-linked (GlcNAc...) asparagine" evidence="1">
    <location>
        <position position="231"/>
    </location>
</feature>
<feature type="glycosylation site" description="N-linked (GlcNAc...) asparagine" evidence="1">
    <location>
        <position position="253"/>
    </location>
</feature>
<feature type="glycosylation site" description="N-linked (GlcNAc...) asparagine" evidence="1">
    <location>
        <position position="328"/>
    </location>
</feature>
<feature type="glycosylation site" description="N-linked (GlcNAc...) asparagine" evidence="1">
    <location>
        <position position="375"/>
    </location>
</feature>
<feature type="glycosylation site" description="N-linked (GlcNAc...) asparagine" evidence="1">
    <location>
        <position position="384"/>
    </location>
</feature>
<feature type="glycosylation site" description="N-linked (GlcNAc...) asparagine" evidence="1">
    <location>
        <position position="393"/>
    </location>
</feature>
<feature type="disulfide bond" evidence="2 5">
    <location>
        <begin position="36"/>
        <end position="170"/>
    </location>
</feature>
<feature type="disulfide bond" evidence="2 5">
    <location>
        <begin position="41"/>
        <end position="101"/>
    </location>
</feature>
<feature type="disulfide bond" evidence="2 5">
    <location>
        <begin position="164"/>
        <end position="213"/>
    </location>
</feature>
<feature type="disulfide bond" evidence="2">
    <location>
        <begin position="269"/>
        <end position="314"/>
    </location>
</feature>
<feature type="sequence variant" id="VAR_014249" description="In dbSNP:rs1973019.">
    <original>V</original>
    <variation>A</variation>
    <location>
        <position position="72"/>
    </location>
</feature>
<feature type="sequence variant" id="VAR_014250" description="In dbSNP:rs1807124.">
    <original>M</original>
    <variation>V</variation>
    <location>
        <position position="215"/>
    </location>
</feature>
<feature type="sequence variant" id="VAR_014251" description="In dbSNP:rs2278831.">
    <original>F</original>
    <variation>S</variation>
    <location>
        <position position="322"/>
    </location>
</feature>
<feature type="sequence variant" id="VAR_049929" description="In dbSNP:rs8108074." evidence="6">
    <original>R</original>
    <variation>W</variation>
    <location>
        <position position="358"/>
    </location>
</feature>
<feature type="sequence variant" id="VAR_020087" description="In dbSNP:rs3829655." evidence="4">
    <original>P</original>
    <variation>A</variation>
    <location>
        <position position="499"/>
    </location>
</feature>
<feature type="sequence conflict" description="In Ref. 1; AAD50978." evidence="7" ref="1">
    <original>E</original>
    <variation>K</variation>
    <location>
        <position position="309"/>
    </location>
</feature>
<feature type="sequence conflict" description="In Ref. 1; AAD50978." evidence="7" ref="1">
    <original>A</original>
    <variation>P</variation>
    <location>
        <position position="388"/>
    </location>
</feature>
<feature type="sequence conflict" description="In Ref. 1; AAD50978." evidence="7" ref="1">
    <original>S</original>
    <variation>N</variation>
    <location>
        <position position="403"/>
    </location>
</feature>
<feature type="strand" evidence="8">
    <location>
        <begin position="22"/>
        <end position="24"/>
    </location>
</feature>
<feature type="strand" evidence="8">
    <location>
        <begin position="27"/>
        <end position="32"/>
    </location>
</feature>
<feature type="strand" evidence="8">
    <location>
        <begin position="37"/>
        <end position="39"/>
    </location>
</feature>
<feature type="strand" evidence="8">
    <location>
        <begin position="42"/>
        <end position="44"/>
    </location>
</feature>
<feature type="strand" evidence="8">
    <location>
        <begin position="56"/>
        <end position="62"/>
    </location>
</feature>
<feature type="helix" evidence="8">
    <location>
        <begin position="67"/>
        <end position="69"/>
    </location>
</feature>
<feature type="strand" evidence="8">
    <location>
        <begin position="72"/>
        <end position="76"/>
    </location>
</feature>
<feature type="strand" evidence="9">
    <location>
        <begin position="78"/>
        <end position="80"/>
    </location>
</feature>
<feature type="turn" evidence="8">
    <location>
        <begin position="84"/>
        <end position="89"/>
    </location>
</feature>
<feature type="strand" evidence="8">
    <location>
        <begin position="90"/>
        <end position="92"/>
    </location>
</feature>
<feature type="helix" evidence="8">
    <location>
        <begin position="96"/>
        <end position="98"/>
    </location>
</feature>
<feature type="strand" evidence="8">
    <location>
        <begin position="103"/>
        <end position="105"/>
    </location>
</feature>
<feature type="helix" evidence="8">
    <location>
        <begin position="110"/>
        <end position="112"/>
    </location>
</feature>
<feature type="strand" evidence="8">
    <location>
        <begin position="114"/>
        <end position="122"/>
    </location>
</feature>
<feature type="turn" evidence="8">
    <location>
        <begin position="123"/>
        <end position="125"/>
    </location>
</feature>
<feature type="strand" evidence="8">
    <location>
        <begin position="126"/>
        <end position="129"/>
    </location>
</feature>
<feature type="strand" evidence="8">
    <location>
        <begin position="135"/>
        <end position="140"/>
    </location>
</feature>
<feature type="strand" evidence="8">
    <location>
        <begin position="147"/>
        <end position="149"/>
    </location>
</feature>
<feature type="strand" evidence="8">
    <location>
        <begin position="160"/>
        <end position="165"/>
    </location>
</feature>
<feature type="strand" evidence="9">
    <location>
        <begin position="171"/>
        <end position="174"/>
    </location>
</feature>
<feature type="strand" evidence="8">
    <location>
        <begin position="177"/>
        <end position="183"/>
    </location>
</feature>
<feature type="strand" evidence="8">
    <location>
        <begin position="186"/>
        <end position="188"/>
    </location>
</feature>
<feature type="turn" evidence="9">
    <location>
        <begin position="190"/>
        <end position="193"/>
    </location>
</feature>
<feature type="strand" evidence="8">
    <location>
        <begin position="195"/>
        <end position="200"/>
    </location>
</feature>
<feature type="turn" evidence="9">
    <location>
        <begin position="204"/>
        <end position="208"/>
    </location>
</feature>
<feature type="strand" evidence="8">
    <location>
        <begin position="210"/>
        <end position="216"/>
    </location>
</feature>
<feature type="strand" evidence="8">
    <location>
        <begin position="225"/>
        <end position="229"/>
    </location>
</feature>
<dbReference type="EMBL" id="AF170484">
    <property type="protein sequence ID" value="AAD50978.1"/>
    <property type="molecule type" value="mRNA"/>
</dbReference>
<dbReference type="EMBL" id="U71383">
    <property type="protein sequence ID" value="AAB70703.1"/>
    <property type="molecule type" value="mRNA"/>
</dbReference>
<dbReference type="EMBL" id="AC018755">
    <property type="protein sequence ID" value="AAF87846.1"/>
    <property type="molecule type" value="Genomic_DNA"/>
</dbReference>
<dbReference type="EMBL" id="BC029896">
    <property type="protein sequence ID" value="AAH29896.1"/>
    <property type="molecule type" value="mRNA"/>
</dbReference>
<dbReference type="CCDS" id="CCDS33088.1"/>
<dbReference type="RefSeq" id="NP_003821.1">
    <property type="nucleotide sequence ID" value="NM_003830.4"/>
</dbReference>
<dbReference type="PDB" id="2ZG1">
    <property type="method" value="X-ray"/>
    <property type="resolution" value="2.70 A"/>
    <property type="chains" value="A=20-233"/>
</dbReference>
<dbReference type="PDB" id="2ZG2">
    <property type="method" value="X-ray"/>
    <property type="resolution" value="2.85 A"/>
    <property type="chains" value="A=20-233"/>
</dbReference>
<dbReference type="PDB" id="2ZG3">
    <property type="method" value="X-ray"/>
    <property type="resolution" value="3.00 A"/>
    <property type="chains" value="A=20-233"/>
</dbReference>
<dbReference type="PDBsum" id="2ZG1"/>
<dbReference type="PDBsum" id="2ZG2"/>
<dbReference type="PDBsum" id="2ZG3"/>
<dbReference type="BMRB" id="O15389"/>
<dbReference type="SMR" id="O15389"/>
<dbReference type="BioGRID" id="114308">
    <property type="interactions" value="29"/>
</dbReference>
<dbReference type="FunCoup" id="O15389">
    <property type="interactions" value="356"/>
</dbReference>
<dbReference type="IntAct" id="O15389">
    <property type="interactions" value="24"/>
</dbReference>
<dbReference type="STRING" id="9606.ENSP00000470259"/>
<dbReference type="UniLectin" id="O15389"/>
<dbReference type="GlyConnect" id="568">
    <property type="glycosylation" value="17 N-Linked glycans"/>
</dbReference>
<dbReference type="GlyCosmos" id="O15389">
    <property type="glycosylation" value="8 sites, 33 glycans"/>
</dbReference>
<dbReference type="GlyGen" id="O15389">
    <property type="glycosylation" value="9 sites, 33 N-linked glycans (1 site)"/>
</dbReference>
<dbReference type="iPTMnet" id="O15389"/>
<dbReference type="PhosphoSitePlus" id="O15389"/>
<dbReference type="BioMuta" id="SIGLEC5"/>
<dbReference type="MassIVE" id="O15389"/>
<dbReference type="PaxDb" id="9606-ENSP00000455510"/>
<dbReference type="PeptideAtlas" id="O15389"/>
<dbReference type="ProteomicsDB" id="48625"/>
<dbReference type="Antibodypedia" id="2301">
    <property type="antibodies" value="594 antibodies from 32 providers"/>
</dbReference>
<dbReference type="DNASU" id="8778"/>
<dbReference type="Ensembl" id="ENST00000683636.1">
    <property type="protein sequence ID" value="ENSP00000507738.1"/>
    <property type="gene ID" value="ENSG00000268500.8"/>
</dbReference>
<dbReference type="GeneID" id="8778"/>
<dbReference type="KEGG" id="hsa:8778"/>
<dbReference type="MANE-Select" id="ENST00000683636.1">
    <property type="protein sequence ID" value="ENSP00000507738.1"/>
    <property type="RefSeq nucleotide sequence ID" value="NM_003830.4"/>
    <property type="RefSeq protein sequence ID" value="NP_003821.1"/>
</dbReference>
<dbReference type="UCSC" id="uc002pxe.5">
    <property type="organism name" value="human"/>
</dbReference>
<dbReference type="AGR" id="HGNC:10874"/>
<dbReference type="CTD" id="8778"/>
<dbReference type="DisGeNET" id="8778"/>
<dbReference type="GeneCards" id="SIGLEC5"/>
<dbReference type="HGNC" id="HGNC:10874">
    <property type="gene designation" value="SIGLEC5"/>
</dbReference>
<dbReference type="HPA" id="ENSG00000268500">
    <property type="expression patterns" value="Group enriched (bone marrow, lymphoid tissue)"/>
</dbReference>
<dbReference type="MIM" id="604200">
    <property type="type" value="gene"/>
</dbReference>
<dbReference type="neXtProt" id="NX_O15389"/>
<dbReference type="OpenTargets" id="ENSG00000268500"/>
<dbReference type="PharmGKB" id="PA35775"/>
<dbReference type="VEuPathDB" id="HostDB:ENSG00000105501"/>
<dbReference type="eggNOG" id="ENOG502S41V">
    <property type="taxonomic scope" value="Eukaryota"/>
</dbReference>
<dbReference type="GeneTree" id="ENSGT01080000257333"/>
<dbReference type="HOGENOM" id="CLU_024444_6_2_1"/>
<dbReference type="InParanoid" id="O15389"/>
<dbReference type="OMA" id="YHDNGFL"/>
<dbReference type="PAN-GO" id="O15389">
    <property type="GO annotations" value="3 GO annotations based on evolutionary models"/>
</dbReference>
<dbReference type="PhylomeDB" id="O15389"/>
<dbReference type="TreeFam" id="TF332441"/>
<dbReference type="PathwayCommons" id="O15389"/>
<dbReference type="Reactome" id="R-HSA-198933">
    <property type="pathway name" value="Immunoregulatory interactions between a Lymphoid and a non-Lymphoid cell"/>
</dbReference>
<dbReference type="Reactome" id="R-HSA-6798695">
    <property type="pathway name" value="Neutrophil degranulation"/>
</dbReference>
<dbReference type="SignaLink" id="O15389"/>
<dbReference type="BioGRID-ORCS" id="8778">
    <property type="hits" value="12 hits in 1137 CRISPR screens"/>
</dbReference>
<dbReference type="EvolutionaryTrace" id="O15389"/>
<dbReference type="GeneWiki" id="SIGLEC5"/>
<dbReference type="GenomeRNAi" id="8778"/>
<dbReference type="Pharos" id="O15389">
    <property type="development level" value="Tbio"/>
</dbReference>
<dbReference type="PRO" id="PR:O15389"/>
<dbReference type="Proteomes" id="UP000005640">
    <property type="component" value="Chromosome 19"/>
</dbReference>
<dbReference type="RNAct" id="O15389">
    <property type="molecule type" value="protein"/>
</dbReference>
<dbReference type="Bgee" id="ENSG00000105501">
    <property type="expression patterns" value="Expressed in blood and 86 other cell types or tissues"/>
</dbReference>
<dbReference type="GO" id="GO:0101003">
    <property type="term" value="C:ficolin-1-rich granule membrane"/>
    <property type="evidence" value="ECO:0000304"/>
    <property type="project" value="Reactome"/>
</dbReference>
<dbReference type="GO" id="GO:0005886">
    <property type="term" value="C:plasma membrane"/>
    <property type="evidence" value="ECO:0000318"/>
    <property type="project" value="GO_Central"/>
</dbReference>
<dbReference type="GO" id="GO:0030667">
    <property type="term" value="C:secretory granule membrane"/>
    <property type="evidence" value="ECO:0000304"/>
    <property type="project" value="Reactome"/>
</dbReference>
<dbReference type="GO" id="GO:0070821">
    <property type="term" value="C:tertiary granule membrane"/>
    <property type="evidence" value="ECO:0000304"/>
    <property type="project" value="Reactome"/>
</dbReference>
<dbReference type="GO" id="GO:0030246">
    <property type="term" value="F:carbohydrate binding"/>
    <property type="evidence" value="ECO:0007669"/>
    <property type="project" value="UniProtKB-KW"/>
</dbReference>
<dbReference type="GO" id="GO:0033691">
    <property type="term" value="F:sialic acid binding"/>
    <property type="evidence" value="ECO:0000318"/>
    <property type="project" value="GO_Central"/>
</dbReference>
<dbReference type="GO" id="GO:0007155">
    <property type="term" value="P:cell adhesion"/>
    <property type="evidence" value="ECO:0000318"/>
    <property type="project" value="GO_Central"/>
</dbReference>
<dbReference type="CDD" id="cd20987">
    <property type="entry name" value="IgC2_CD33_d2_like"/>
    <property type="match status" value="1"/>
</dbReference>
<dbReference type="CDD" id="cd05712">
    <property type="entry name" value="IgV_CD33"/>
    <property type="match status" value="1"/>
</dbReference>
<dbReference type="FunFam" id="2.60.40.10:FF:001240">
    <property type="entry name" value="Sialic acid binding Ig-like lectin E"/>
    <property type="match status" value="1"/>
</dbReference>
<dbReference type="FunFam" id="2.60.40.10:FF:002151">
    <property type="entry name" value="Sialic acid-binding Ig-like lectin 5"/>
    <property type="match status" value="1"/>
</dbReference>
<dbReference type="FunFam" id="2.60.40.10:FF:000829">
    <property type="entry name" value="Sialic acid-binding Ig-like lectin 8"/>
    <property type="match status" value="1"/>
</dbReference>
<dbReference type="Gene3D" id="2.60.40.10">
    <property type="entry name" value="Immunoglobulins"/>
    <property type="match status" value="4"/>
</dbReference>
<dbReference type="InterPro" id="IPR007110">
    <property type="entry name" value="Ig-like_dom"/>
</dbReference>
<dbReference type="InterPro" id="IPR036179">
    <property type="entry name" value="Ig-like_dom_sf"/>
</dbReference>
<dbReference type="InterPro" id="IPR013783">
    <property type="entry name" value="Ig-like_fold"/>
</dbReference>
<dbReference type="InterPro" id="IPR003599">
    <property type="entry name" value="Ig_sub"/>
</dbReference>
<dbReference type="InterPro" id="IPR003598">
    <property type="entry name" value="Ig_sub2"/>
</dbReference>
<dbReference type="InterPro" id="IPR013106">
    <property type="entry name" value="Ig_V-set"/>
</dbReference>
<dbReference type="InterPro" id="IPR051036">
    <property type="entry name" value="SIGLEC"/>
</dbReference>
<dbReference type="PANTHER" id="PTHR12035">
    <property type="entry name" value="SIALIC ACID BINDING IMMUNOGLOBULIN-LIKE LECTIN"/>
    <property type="match status" value="1"/>
</dbReference>
<dbReference type="PANTHER" id="PTHR12035:SF125">
    <property type="entry name" value="SIALIC ACID-BINDING IG-LIKE LECTIN 5"/>
    <property type="match status" value="1"/>
</dbReference>
<dbReference type="Pfam" id="PF13927">
    <property type="entry name" value="Ig_3"/>
    <property type="match status" value="1"/>
</dbReference>
<dbReference type="Pfam" id="PF07686">
    <property type="entry name" value="V-set"/>
    <property type="match status" value="1"/>
</dbReference>
<dbReference type="SMART" id="SM00409">
    <property type="entry name" value="IG"/>
    <property type="match status" value="3"/>
</dbReference>
<dbReference type="SMART" id="SM00408">
    <property type="entry name" value="IGc2"/>
    <property type="match status" value="1"/>
</dbReference>
<dbReference type="SUPFAM" id="SSF48726">
    <property type="entry name" value="Immunoglobulin"/>
    <property type="match status" value="4"/>
</dbReference>
<dbReference type="PROSITE" id="PS50835">
    <property type="entry name" value="IG_LIKE"/>
    <property type="match status" value="3"/>
</dbReference>
<dbReference type="PROSITE" id="PS00290">
    <property type="entry name" value="IG_MHC"/>
    <property type="match status" value="1"/>
</dbReference>
<accession>O15389</accession>
<name>SIGL5_HUMAN</name>
<protein>
    <recommendedName>
        <fullName>Sialic acid-binding Ig-like lectin 5</fullName>
        <shortName>Siglec-5</shortName>
    </recommendedName>
    <alternativeName>
        <fullName>CD33 antigen-like 2</fullName>
    </alternativeName>
    <alternativeName>
        <fullName>Obesity-binding protein 2</fullName>
        <shortName>OB-BP2</shortName>
        <shortName>OB-binding protein 2</shortName>
    </alternativeName>
    <cdAntigenName>CD170</cdAntigenName>
</protein>
<evidence type="ECO:0000255" key="1"/>
<evidence type="ECO:0000255" key="2">
    <source>
        <dbReference type="PROSITE-ProRule" id="PRU00114"/>
    </source>
</evidence>
<evidence type="ECO:0000256" key="3">
    <source>
        <dbReference type="SAM" id="MobiDB-lite"/>
    </source>
</evidence>
<evidence type="ECO:0000269" key="4">
    <source>
    </source>
</evidence>
<evidence type="ECO:0000269" key="5">
    <source>
    </source>
</evidence>
<evidence type="ECO:0000269" key="6">
    <source>
    </source>
</evidence>
<evidence type="ECO:0000305" key="7"/>
<evidence type="ECO:0007829" key="8">
    <source>
        <dbReference type="PDB" id="2ZG1"/>
    </source>
</evidence>
<evidence type="ECO:0007829" key="9">
    <source>
        <dbReference type="PDB" id="2ZG2"/>
    </source>
</evidence>
<gene>
    <name type="primary">SIGLEC5</name>
    <name type="synonym">CD33L2</name>
    <name type="synonym">OBBP2</name>
</gene>
<proteinExistence type="evidence at protein level"/>
<organism>
    <name type="scientific">Homo sapiens</name>
    <name type="common">Human</name>
    <dbReference type="NCBI Taxonomy" id="9606"/>
    <lineage>
        <taxon>Eukaryota</taxon>
        <taxon>Metazoa</taxon>
        <taxon>Chordata</taxon>
        <taxon>Craniata</taxon>
        <taxon>Vertebrata</taxon>
        <taxon>Euteleostomi</taxon>
        <taxon>Mammalia</taxon>
        <taxon>Eutheria</taxon>
        <taxon>Euarchontoglires</taxon>
        <taxon>Primates</taxon>
        <taxon>Haplorrhini</taxon>
        <taxon>Catarrhini</taxon>
        <taxon>Hominidae</taxon>
        <taxon>Homo</taxon>
    </lineage>
</organism>
<comment type="function">
    <text>Putative adhesion molecule that mediates sialic-acid dependent binding to cells. Binds equally to alpha-2,3-linked and alpha-2,6-linked sialic acid. The sialic acid recognition site may be masked by cis interactions with sialic acids on the same cell surface.</text>
</comment>
<comment type="interaction">
    <interactant intactId="EBI-750381">
        <id>O15389</id>
    </interactant>
    <interactant intactId="EBI-3921185">
        <id>Q9H115</id>
        <label>NAPB</label>
    </interactant>
    <organismsDiffer>false</organismsDiffer>
    <experiments>3</experiments>
</comment>
<comment type="interaction">
    <interactant intactId="EBI-750381">
        <id>O15389</id>
    </interactant>
    <interactant intactId="EBI-13292283">
        <id>Q9UHI5</id>
        <label>SLC7A8</label>
    </interactant>
    <organismsDiffer>false</organismsDiffer>
    <experiments>3</experiments>
</comment>
<comment type="interaction">
    <interactant intactId="EBI-750381">
        <id>O15389</id>
    </interactant>
    <interactant intactId="EBI-528701">
        <id>O00206</id>
        <label>TLR4</label>
    </interactant>
    <organismsDiffer>false</organismsDiffer>
    <experiments>2</experiments>
</comment>
<comment type="interaction">
    <interactant intactId="EBI-750381">
        <id>O15389</id>
    </interactant>
    <interactant intactId="EBI-358993">
        <id>Q15645</id>
        <label>TRIP13</label>
    </interactant>
    <organismsDiffer>false</organismsDiffer>
    <experiments>4</experiments>
</comment>
<comment type="interaction">
    <interactant intactId="EBI-750381">
        <id>O15389</id>
    </interactant>
    <interactant intactId="EBI-2107455">
        <id>Q08AM6</id>
        <label>VAC14</label>
    </interactant>
    <organismsDiffer>false</organismsDiffer>
    <experiments>6</experiments>
</comment>
<comment type="subcellular location">
    <subcellularLocation>
        <location>Membrane</location>
        <topology>Single-pass type I membrane protein</topology>
    </subcellularLocation>
</comment>
<comment type="tissue specificity">
    <text>Expressed by monocytic/myeloid lineage cells. Found at high levels in peripheral blood leukocytes, spleen, bone marrow and at lower levels in lymph node, lung, appendix, placenta, pancreas and thymus. Expressed by monocytes and neutrophils but absent from leukemic cell lines representing early stages of myelomonocytic differentiation.</text>
</comment>
<comment type="domain">
    <text>Contains 1 copy of a cytoplasmic motif that is referred to as the immunoreceptor tyrosine-based inhibitor motif (ITIM). This motif is involved in modulation of cellular responses. The phosphorylated ITIM motif can bind the SH2 domain of several SH2-containing phosphatases.</text>
</comment>
<comment type="similarity">
    <text evidence="7">Belongs to the immunoglobulin superfamily. SIGLEC (sialic acid binding Ig-like lectin) family.</text>
</comment>
<comment type="online information" name="Functional Glycomics Gateway - Glycan Binding">
    <link uri="http://www.functionalglycomics.org/glycomics/GBPServlet?&amp;operationType=view&amp;cbpId=cbp_hum_Itlect_272"/>
    <text>Siglec-5</text>
</comment>
<sequence>MLPLLLLPLLWGGSLQEKPVYELQVQKSVTVQEGLCVLVPCSFSYPWRSWYSSPPLYVYWFRDGEIPYYAEVVATNNPDRRVKPETQGRFRLLGDVQKKNCSLSIGDARMEDTGSYFFRVERGRDVKYSYQQNKLNLEVTALIEKPDIHFLEPLESGRPTRLSCSLPGSCEAGPPLTFSWTGNALSPLDPETTRSSELTLTPRPEDHGTNLTCQMKRQGAQVTTERTVQLNVSYAPQTITIFRNGIALEILQNTSYLPVLEGQALRLLCDAPSNPPAHLSWFQGSPALNATPISNTGILELRRVRSAEEGGFTCRAQHPLGFLQIFLNLSVYSLPQLLGPSCSWEAEGLHCRCSFRARPAPSLCWRLEEKPLEGNSSQGSFKVNSSSAGPWANSSLILHGGLSSDLKVSCKAWNIYGSQSGSVLLLQGRSNLGTGVVPAALGGAGVMALLCICLCLIFFLIVKARRKQAAGRPEKMDDEDPIMGTITSGSRKKPWPDSPGDQASPPGDAPPLEEQKELHYASLSFSEMKSREPKDQEAPSTTEYSEIKTSK</sequence>
<keyword id="KW-0002">3D-structure</keyword>
<keyword id="KW-0130">Cell adhesion</keyword>
<keyword id="KW-1015">Disulfide bond</keyword>
<keyword id="KW-0325">Glycoprotein</keyword>
<keyword id="KW-0393">Immunoglobulin domain</keyword>
<keyword id="KW-0430">Lectin</keyword>
<keyword id="KW-0472">Membrane</keyword>
<keyword id="KW-1267">Proteomics identification</keyword>
<keyword id="KW-1185">Reference proteome</keyword>
<keyword id="KW-0677">Repeat</keyword>
<keyword id="KW-0732">Signal</keyword>
<keyword id="KW-0812">Transmembrane</keyword>
<keyword id="KW-1133">Transmembrane helix</keyword>
<reference key="1">
    <citation type="journal article" date="1998" name="Blood">
        <title>Characterization of siglec-5, a novel glycoprotein expressed on myeloid cells related to CD33.</title>
        <authorList>
            <person name="Cornish A.L."/>
            <person name="Freeman S."/>
            <person name="Forbes G."/>
            <person name="Ni J."/>
            <person name="Zhang M."/>
            <person name="Cepeda M."/>
            <person name="Gentz R."/>
            <person name="Augustus M."/>
            <person name="Carter K.C."/>
            <person name="Crocker P.R."/>
        </authorList>
    </citation>
    <scope>NUCLEOTIDE SEQUENCE [MRNA]</scope>
    <scope>VARIANT TRP-358</scope>
    <source>
        <tissue>Macrophage</tissue>
    </source>
</reference>
<reference key="2">
    <citation type="journal article" date="1999" name="J. Biol. Chem.">
        <title>OB-BP1/Siglec-6. A leptin- and sialic acid-binding protein of the immunoglobulin superfamily.</title>
        <authorList>
            <person name="Patel N."/>
            <person name="Brinkman-Van der Linden E.C.M."/>
            <person name="Altmann S.W."/>
            <person name="Gish K.C."/>
            <person name="Balasubramanian S."/>
            <person name="Timans J.C."/>
            <person name="Peterson D."/>
            <person name="Bell M.P."/>
            <person name="Bazan J.F."/>
            <person name="Varki A."/>
            <person name="Kastelein R.A."/>
        </authorList>
    </citation>
    <scope>NUCLEOTIDE SEQUENCE [MRNA]</scope>
    <source>
        <tissue>Erythroleukemia</tissue>
    </source>
</reference>
<reference key="3">
    <citation type="journal article" date="1999" name="J. Biol. Chem.">
        <authorList>
            <person name="Patel N."/>
            <person name="Brinkman-Van der Linden E.C.M."/>
            <person name="Altmann S.W."/>
            <person name="Gish K.C."/>
            <person name="Balasubramanian S."/>
            <person name="Timans J.C."/>
            <person name="Peterson D."/>
            <person name="Bell M.P."/>
            <person name="Bazan J.F."/>
            <person name="Varki A."/>
            <person name="Kastelein R.A."/>
        </authorList>
    </citation>
    <scope>ERRATUM OF PUBMED:10428856</scope>
</reference>
<reference key="4">
    <citation type="journal article" date="2004" name="Nature">
        <title>The DNA sequence and biology of human chromosome 19.</title>
        <authorList>
            <person name="Grimwood J."/>
            <person name="Gordon L.A."/>
            <person name="Olsen A.S."/>
            <person name="Terry A."/>
            <person name="Schmutz J."/>
            <person name="Lamerdin J.E."/>
            <person name="Hellsten U."/>
            <person name="Goodstein D."/>
            <person name="Couronne O."/>
            <person name="Tran-Gyamfi M."/>
            <person name="Aerts A."/>
            <person name="Altherr M."/>
            <person name="Ashworth L."/>
            <person name="Bajorek E."/>
            <person name="Black S."/>
            <person name="Branscomb E."/>
            <person name="Caenepeel S."/>
            <person name="Carrano A.V."/>
            <person name="Caoile C."/>
            <person name="Chan Y.M."/>
            <person name="Christensen M."/>
            <person name="Cleland C.A."/>
            <person name="Copeland A."/>
            <person name="Dalin E."/>
            <person name="Dehal P."/>
            <person name="Denys M."/>
            <person name="Detter J.C."/>
            <person name="Escobar J."/>
            <person name="Flowers D."/>
            <person name="Fotopulos D."/>
            <person name="Garcia C."/>
            <person name="Georgescu A.M."/>
            <person name="Glavina T."/>
            <person name="Gomez M."/>
            <person name="Gonzales E."/>
            <person name="Groza M."/>
            <person name="Hammon N."/>
            <person name="Hawkins T."/>
            <person name="Haydu L."/>
            <person name="Ho I."/>
            <person name="Huang W."/>
            <person name="Israni S."/>
            <person name="Jett J."/>
            <person name="Kadner K."/>
            <person name="Kimball H."/>
            <person name="Kobayashi A."/>
            <person name="Larionov V."/>
            <person name="Leem S.-H."/>
            <person name="Lopez F."/>
            <person name="Lou Y."/>
            <person name="Lowry S."/>
            <person name="Malfatti S."/>
            <person name="Martinez D."/>
            <person name="McCready P.M."/>
            <person name="Medina C."/>
            <person name="Morgan J."/>
            <person name="Nelson K."/>
            <person name="Nolan M."/>
            <person name="Ovcharenko I."/>
            <person name="Pitluck S."/>
            <person name="Pollard M."/>
            <person name="Popkie A.P."/>
            <person name="Predki P."/>
            <person name="Quan G."/>
            <person name="Ramirez L."/>
            <person name="Rash S."/>
            <person name="Retterer J."/>
            <person name="Rodriguez A."/>
            <person name="Rogers S."/>
            <person name="Salamov A."/>
            <person name="Salazar A."/>
            <person name="She X."/>
            <person name="Smith D."/>
            <person name="Slezak T."/>
            <person name="Solovyev V."/>
            <person name="Thayer N."/>
            <person name="Tice H."/>
            <person name="Tsai M."/>
            <person name="Ustaszewska A."/>
            <person name="Vo N."/>
            <person name="Wagner M."/>
            <person name="Wheeler J."/>
            <person name="Wu K."/>
            <person name="Xie G."/>
            <person name="Yang J."/>
            <person name="Dubchak I."/>
            <person name="Furey T.S."/>
            <person name="DeJong P."/>
            <person name="Dickson M."/>
            <person name="Gordon D."/>
            <person name="Eichler E.E."/>
            <person name="Pennacchio L.A."/>
            <person name="Richardson P."/>
            <person name="Stubbs L."/>
            <person name="Rokhsar D.S."/>
            <person name="Myers R.M."/>
            <person name="Rubin E.M."/>
            <person name="Lucas S.M."/>
        </authorList>
    </citation>
    <scope>NUCLEOTIDE SEQUENCE [LARGE SCALE GENOMIC DNA]</scope>
</reference>
<reference key="5">
    <citation type="journal article" date="2004" name="Genome Res.">
        <title>The status, quality, and expansion of the NIH full-length cDNA project: the Mammalian Gene Collection (MGC).</title>
        <authorList>
            <consortium name="The MGC Project Team"/>
        </authorList>
    </citation>
    <scope>NUCLEOTIDE SEQUENCE [LARGE SCALE MRNA]</scope>
    <scope>VARIANT ALA-499</scope>
    <source>
        <tissue>Brain</tissue>
    </source>
</reference>
<reference key="6">
    <citation type="journal article" date="2008" name="J. Mol. Biol.">
        <title>Structural implications of Siglec-5-mediated sialoglycan recognition.</title>
        <authorList>
            <person name="Zhuravleva M.A."/>
            <person name="Trandem K."/>
            <person name="Sun P.D."/>
        </authorList>
    </citation>
    <scope>X-RAY CRYSTALLOGRAPHY (2.7 ANGSTROMS) OF 20-233 ALONE AND IN COMPLEX WITH ALPHA-LINKED SIALYLLACTOSES</scope>
    <scope>DISULFIDE BONDS</scope>
    <scope>SIALIC ACID BINDING SITES</scope>
</reference>